<gene>
    <name type="primary">RPL36C</name>
    <name type="ordered locus">At5g02450</name>
    <name type="ORF">T22P11_40</name>
</gene>
<dbReference type="EMBL" id="AL162971">
    <property type="protein sequence ID" value="CAB85982.1"/>
    <property type="molecule type" value="Genomic_DNA"/>
</dbReference>
<dbReference type="EMBL" id="CP002688">
    <property type="protein sequence ID" value="AED90473.1"/>
    <property type="molecule type" value="Genomic_DNA"/>
</dbReference>
<dbReference type="EMBL" id="AF324687">
    <property type="protein sequence ID" value="AAG40038.1"/>
    <property type="molecule type" value="mRNA"/>
</dbReference>
<dbReference type="EMBL" id="AF326882">
    <property type="protein sequence ID" value="AAG41464.1"/>
    <property type="molecule type" value="mRNA"/>
</dbReference>
<dbReference type="EMBL" id="AF339702">
    <property type="protein sequence ID" value="AAK00384.1"/>
    <property type="molecule type" value="mRNA"/>
</dbReference>
<dbReference type="EMBL" id="AY057706">
    <property type="protein sequence ID" value="AAL15336.1"/>
    <property type="molecule type" value="mRNA"/>
</dbReference>
<dbReference type="EMBL" id="AY133624">
    <property type="protein sequence ID" value="AAM91454.1"/>
    <property type="molecule type" value="mRNA"/>
</dbReference>
<dbReference type="EMBL" id="AY087041">
    <property type="protein sequence ID" value="AAM64602.1"/>
    <property type="molecule type" value="mRNA"/>
</dbReference>
<dbReference type="PIR" id="T48266">
    <property type="entry name" value="T48266"/>
</dbReference>
<dbReference type="RefSeq" id="NP_195865.1">
    <property type="nucleotide sequence ID" value="NM_120323.4"/>
</dbReference>
<dbReference type="SMR" id="Q9LZ57"/>
<dbReference type="BioGRID" id="17183">
    <property type="interactions" value="162"/>
</dbReference>
<dbReference type="FunCoup" id="Q9LZ57">
    <property type="interactions" value="2842"/>
</dbReference>
<dbReference type="IntAct" id="Q9LZ57">
    <property type="interactions" value="1"/>
</dbReference>
<dbReference type="STRING" id="3702.Q9LZ57"/>
<dbReference type="iPTMnet" id="Q9LZ57"/>
<dbReference type="MetOSite" id="Q9LZ57"/>
<dbReference type="PaxDb" id="3702-AT5G02450.1"/>
<dbReference type="ProteomicsDB" id="226819"/>
<dbReference type="EnsemblPlants" id="AT5G02450.1">
    <property type="protein sequence ID" value="AT5G02450.1"/>
    <property type="gene ID" value="AT5G02450"/>
</dbReference>
<dbReference type="GeneID" id="831907"/>
<dbReference type="Gramene" id="AT5G02450.1">
    <property type="protein sequence ID" value="AT5G02450.1"/>
    <property type="gene ID" value="AT5G02450"/>
</dbReference>
<dbReference type="KEGG" id="ath:AT5G02450"/>
<dbReference type="Araport" id="AT5G02450"/>
<dbReference type="TAIR" id="AT5G02450"/>
<dbReference type="eggNOG" id="KOG3452">
    <property type="taxonomic scope" value="Eukaryota"/>
</dbReference>
<dbReference type="HOGENOM" id="CLU_140672_0_0_1"/>
<dbReference type="InParanoid" id="Q9LZ57"/>
<dbReference type="OMA" id="WGINRGH"/>
<dbReference type="PhylomeDB" id="Q9LZ57"/>
<dbReference type="PRO" id="PR:Q9LZ57"/>
<dbReference type="Proteomes" id="UP000006548">
    <property type="component" value="Chromosome 5"/>
</dbReference>
<dbReference type="ExpressionAtlas" id="Q9LZ57">
    <property type="expression patterns" value="baseline and differential"/>
</dbReference>
<dbReference type="GO" id="GO:0022625">
    <property type="term" value="C:cytosolic large ribosomal subunit"/>
    <property type="evidence" value="ECO:0007005"/>
    <property type="project" value="TAIR"/>
</dbReference>
<dbReference type="GO" id="GO:0000325">
    <property type="term" value="C:plant-type vacuole"/>
    <property type="evidence" value="ECO:0007005"/>
    <property type="project" value="TAIR"/>
</dbReference>
<dbReference type="GO" id="GO:0005886">
    <property type="term" value="C:plasma membrane"/>
    <property type="evidence" value="ECO:0007005"/>
    <property type="project" value="TAIR"/>
</dbReference>
<dbReference type="GO" id="GO:0009506">
    <property type="term" value="C:plasmodesma"/>
    <property type="evidence" value="ECO:0007005"/>
    <property type="project" value="TAIR"/>
</dbReference>
<dbReference type="GO" id="GO:0003729">
    <property type="term" value="F:mRNA binding"/>
    <property type="evidence" value="ECO:0000314"/>
    <property type="project" value="TAIR"/>
</dbReference>
<dbReference type="GO" id="GO:0003735">
    <property type="term" value="F:structural constituent of ribosome"/>
    <property type="evidence" value="ECO:0000314"/>
    <property type="project" value="CAFA"/>
</dbReference>
<dbReference type="GO" id="GO:0006412">
    <property type="term" value="P:translation"/>
    <property type="evidence" value="ECO:0007669"/>
    <property type="project" value="InterPro"/>
</dbReference>
<dbReference type="FunFam" id="1.10.10.1760:FF:000001">
    <property type="entry name" value="60S ribosomal protein L36"/>
    <property type="match status" value="1"/>
</dbReference>
<dbReference type="Gene3D" id="1.10.10.1760">
    <property type="entry name" value="60S ribosomal protein L36"/>
    <property type="match status" value="1"/>
</dbReference>
<dbReference type="InterPro" id="IPR000509">
    <property type="entry name" value="Ribosomal_eL36"/>
</dbReference>
<dbReference type="InterPro" id="IPR038097">
    <property type="entry name" value="Ribosomal_eL36_sf"/>
</dbReference>
<dbReference type="PANTHER" id="PTHR10114">
    <property type="entry name" value="60S RIBOSOMAL PROTEIN L36"/>
    <property type="match status" value="1"/>
</dbReference>
<dbReference type="Pfam" id="PF01158">
    <property type="entry name" value="Ribosomal_L36e"/>
    <property type="match status" value="1"/>
</dbReference>
<dbReference type="PROSITE" id="PS01190">
    <property type="entry name" value="RIBOSOMAL_L36E"/>
    <property type="match status" value="1"/>
</dbReference>
<evidence type="ECO:0000256" key="1">
    <source>
        <dbReference type="SAM" id="MobiDB-lite"/>
    </source>
</evidence>
<evidence type="ECO:0000303" key="2">
    <source>
    </source>
</evidence>
<evidence type="ECO:0000305" key="3"/>
<accession>Q9LZ57</accession>
<proteinExistence type="inferred from homology"/>
<keyword id="KW-1185">Reference proteome</keyword>
<keyword id="KW-0687">Ribonucleoprotein</keyword>
<keyword id="KW-0689">Ribosomal protein</keyword>
<sequence length="108" mass="12190">MVATGLFVGLNKGHVVTKREQPPRPNNRKGKTSKRTIFIRNLIKEVAGQAPYEKRITELLKVGKDKRALKVAKRKLGTHKRAKRKREEMSSVLRKMRSGGAGASEKKK</sequence>
<organism>
    <name type="scientific">Arabidopsis thaliana</name>
    <name type="common">Mouse-ear cress</name>
    <dbReference type="NCBI Taxonomy" id="3702"/>
    <lineage>
        <taxon>Eukaryota</taxon>
        <taxon>Viridiplantae</taxon>
        <taxon>Streptophyta</taxon>
        <taxon>Embryophyta</taxon>
        <taxon>Tracheophyta</taxon>
        <taxon>Spermatophyta</taxon>
        <taxon>Magnoliopsida</taxon>
        <taxon>eudicotyledons</taxon>
        <taxon>Gunneridae</taxon>
        <taxon>Pentapetalae</taxon>
        <taxon>rosids</taxon>
        <taxon>malvids</taxon>
        <taxon>Brassicales</taxon>
        <taxon>Brassicaceae</taxon>
        <taxon>Camelineae</taxon>
        <taxon>Arabidopsis</taxon>
    </lineage>
</organism>
<reference key="1">
    <citation type="journal article" date="2000" name="Nature">
        <title>Sequence and analysis of chromosome 5 of the plant Arabidopsis thaliana.</title>
        <authorList>
            <person name="Tabata S."/>
            <person name="Kaneko T."/>
            <person name="Nakamura Y."/>
            <person name="Kotani H."/>
            <person name="Kato T."/>
            <person name="Asamizu E."/>
            <person name="Miyajima N."/>
            <person name="Sasamoto S."/>
            <person name="Kimura T."/>
            <person name="Hosouchi T."/>
            <person name="Kawashima K."/>
            <person name="Kohara M."/>
            <person name="Matsumoto M."/>
            <person name="Matsuno A."/>
            <person name="Muraki A."/>
            <person name="Nakayama S."/>
            <person name="Nakazaki N."/>
            <person name="Naruo K."/>
            <person name="Okumura S."/>
            <person name="Shinpo S."/>
            <person name="Takeuchi C."/>
            <person name="Wada T."/>
            <person name="Watanabe A."/>
            <person name="Yamada M."/>
            <person name="Yasuda M."/>
            <person name="Sato S."/>
            <person name="de la Bastide M."/>
            <person name="Huang E."/>
            <person name="Spiegel L."/>
            <person name="Gnoj L."/>
            <person name="O'Shaughnessy A."/>
            <person name="Preston R."/>
            <person name="Habermann K."/>
            <person name="Murray J."/>
            <person name="Johnson D."/>
            <person name="Rohlfing T."/>
            <person name="Nelson J."/>
            <person name="Stoneking T."/>
            <person name="Pepin K."/>
            <person name="Spieth J."/>
            <person name="Sekhon M."/>
            <person name="Armstrong J."/>
            <person name="Becker M."/>
            <person name="Belter E."/>
            <person name="Cordum H."/>
            <person name="Cordes M."/>
            <person name="Courtney L."/>
            <person name="Courtney W."/>
            <person name="Dante M."/>
            <person name="Du H."/>
            <person name="Edwards J."/>
            <person name="Fryman J."/>
            <person name="Haakensen B."/>
            <person name="Lamar E."/>
            <person name="Latreille P."/>
            <person name="Leonard S."/>
            <person name="Meyer R."/>
            <person name="Mulvaney E."/>
            <person name="Ozersky P."/>
            <person name="Riley A."/>
            <person name="Strowmatt C."/>
            <person name="Wagner-McPherson C."/>
            <person name="Wollam A."/>
            <person name="Yoakum M."/>
            <person name="Bell M."/>
            <person name="Dedhia N."/>
            <person name="Parnell L."/>
            <person name="Shah R."/>
            <person name="Rodriguez M."/>
            <person name="Hoon See L."/>
            <person name="Vil D."/>
            <person name="Baker J."/>
            <person name="Kirchoff K."/>
            <person name="Toth K."/>
            <person name="King L."/>
            <person name="Bahret A."/>
            <person name="Miller B."/>
            <person name="Marra M.A."/>
            <person name="Martienssen R."/>
            <person name="McCombie W.R."/>
            <person name="Wilson R.K."/>
            <person name="Murphy G."/>
            <person name="Bancroft I."/>
            <person name="Volckaert G."/>
            <person name="Wambutt R."/>
            <person name="Duesterhoeft A."/>
            <person name="Stiekema W."/>
            <person name="Pohl T."/>
            <person name="Entian K.-D."/>
            <person name="Terryn N."/>
            <person name="Hartley N."/>
            <person name="Bent E."/>
            <person name="Johnson S."/>
            <person name="Langham S.-A."/>
            <person name="McCullagh B."/>
            <person name="Robben J."/>
            <person name="Grymonprez B."/>
            <person name="Zimmermann W."/>
            <person name="Ramsperger U."/>
            <person name="Wedler H."/>
            <person name="Balke K."/>
            <person name="Wedler E."/>
            <person name="Peters S."/>
            <person name="van Staveren M."/>
            <person name="Dirkse W."/>
            <person name="Mooijman P."/>
            <person name="Klein Lankhorst R."/>
            <person name="Weitzenegger T."/>
            <person name="Bothe G."/>
            <person name="Rose M."/>
            <person name="Hauf J."/>
            <person name="Berneiser S."/>
            <person name="Hempel S."/>
            <person name="Feldpausch M."/>
            <person name="Lamberth S."/>
            <person name="Villarroel R."/>
            <person name="Gielen J."/>
            <person name="Ardiles W."/>
            <person name="Bents O."/>
            <person name="Lemcke K."/>
            <person name="Kolesov G."/>
            <person name="Mayer K.F.X."/>
            <person name="Rudd S."/>
            <person name="Schoof H."/>
            <person name="Schueller C."/>
            <person name="Zaccaria P."/>
            <person name="Mewes H.-W."/>
            <person name="Bevan M."/>
            <person name="Fransz P.F."/>
        </authorList>
    </citation>
    <scope>NUCLEOTIDE SEQUENCE [LARGE SCALE GENOMIC DNA]</scope>
    <source>
        <strain>cv. Columbia</strain>
    </source>
</reference>
<reference key="2">
    <citation type="journal article" date="2017" name="Plant J.">
        <title>Araport11: a complete reannotation of the Arabidopsis thaliana reference genome.</title>
        <authorList>
            <person name="Cheng C.Y."/>
            <person name="Krishnakumar V."/>
            <person name="Chan A.P."/>
            <person name="Thibaud-Nissen F."/>
            <person name="Schobel S."/>
            <person name="Town C.D."/>
        </authorList>
    </citation>
    <scope>GENOME REANNOTATION</scope>
    <source>
        <strain>cv. Columbia</strain>
    </source>
</reference>
<reference key="3">
    <citation type="journal article" date="2003" name="Science">
        <title>Empirical analysis of transcriptional activity in the Arabidopsis genome.</title>
        <authorList>
            <person name="Yamada K."/>
            <person name="Lim J."/>
            <person name="Dale J.M."/>
            <person name="Chen H."/>
            <person name="Shinn P."/>
            <person name="Palm C.J."/>
            <person name="Southwick A.M."/>
            <person name="Wu H.C."/>
            <person name="Kim C.J."/>
            <person name="Nguyen M."/>
            <person name="Pham P.K."/>
            <person name="Cheuk R.F."/>
            <person name="Karlin-Newmann G."/>
            <person name="Liu S.X."/>
            <person name="Lam B."/>
            <person name="Sakano H."/>
            <person name="Wu T."/>
            <person name="Yu G."/>
            <person name="Miranda M."/>
            <person name="Quach H.L."/>
            <person name="Tripp M."/>
            <person name="Chang C.H."/>
            <person name="Lee J.M."/>
            <person name="Toriumi M.J."/>
            <person name="Chan M.M."/>
            <person name="Tang C.C."/>
            <person name="Onodera C.S."/>
            <person name="Deng J.M."/>
            <person name="Akiyama K."/>
            <person name="Ansari Y."/>
            <person name="Arakawa T."/>
            <person name="Banh J."/>
            <person name="Banno F."/>
            <person name="Bowser L."/>
            <person name="Brooks S.Y."/>
            <person name="Carninci P."/>
            <person name="Chao Q."/>
            <person name="Choy N."/>
            <person name="Enju A."/>
            <person name="Goldsmith A.D."/>
            <person name="Gurjal M."/>
            <person name="Hansen N.F."/>
            <person name="Hayashizaki Y."/>
            <person name="Johnson-Hopson C."/>
            <person name="Hsuan V.W."/>
            <person name="Iida K."/>
            <person name="Karnes M."/>
            <person name="Khan S."/>
            <person name="Koesema E."/>
            <person name="Ishida J."/>
            <person name="Jiang P.X."/>
            <person name="Jones T."/>
            <person name="Kawai J."/>
            <person name="Kamiya A."/>
            <person name="Meyers C."/>
            <person name="Nakajima M."/>
            <person name="Narusaka M."/>
            <person name="Seki M."/>
            <person name="Sakurai T."/>
            <person name="Satou M."/>
            <person name="Tamse R."/>
            <person name="Vaysberg M."/>
            <person name="Wallender E.K."/>
            <person name="Wong C."/>
            <person name="Yamamura Y."/>
            <person name="Yuan S."/>
            <person name="Shinozaki K."/>
            <person name="Davis R.W."/>
            <person name="Theologis A."/>
            <person name="Ecker J.R."/>
        </authorList>
    </citation>
    <scope>NUCLEOTIDE SEQUENCE [LARGE SCALE MRNA]</scope>
    <source>
        <strain>cv. Columbia</strain>
    </source>
</reference>
<reference key="4">
    <citation type="submission" date="2002-03" db="EMBL/GenBank/DDBJ databases">
        <title>Full-length cDNA from Arabidopsis thaliana.</title>
        <authorList>
            <person name="Brover V.V."/>
            <person name="Troukhan M.E."/>
            <person name="Alexandrov N.A."/>
            <person name="Lu Y.-P."/>
            <person name="Flavell R.B."/>
            <person name="Feldmann K.A."/>
        </authorList>
    </citation>
    <scope>NUCLEOTIDE SEQUENCE [LARGE SCALE MRNA]</scope>
</reference>
<reference key="5">
    <citation type="journal article" date="2001" name="Plant Physiol.">
        <title>The organization of cytoplasmic ribosomal protein genes in the Arabidopsis genome.</title>
        <authorList>
            <person name="Barakat A."/>
            <person name="Szick-Miranda K."/>
            <person name="Chang I.-F."/>
            <person name="Guyot R."/>
            <person name="Blanc G."/>
            <person name="Cooke R."/>
            <person name="Delseny M."/>
            <person name="Bailey-Serres J."/>
        </authorList>
    </citation>
    <scope>GENE FAMILY ORGANIZATION</scope>
    <scope>NOMENCLATURE</scope>
</reference>
<reference key="6">
    <citation type="journal article" date="2023" name="Plant Cell">
        <title>An updated nomenclature for plant ribosomal protein genes.</title>
        <authorList>
            <person name="Scarpin M.R."/>
            <person name="Busche M."/>
            <person name="Martinez R.E."/>
            <person name="Harper L.C."/>
            <person name="Reiser L."/>
            <person name="Szakonyi D."/>
            <person name="Merchante C."/>
            <person name="Lan T."/>
            <person name="Xiong W."/>
            <person name="Mo B."/>
            <person name="Tang G."/>
            <person name="Chen X."/>
            <person name="Bailey-Serres J."/>
            <person name="Browning K.S."/>
            <person name="Brunkard J.O."/>
        </authorList>
    </citation>
    <scope>NOMENCLATURE</scope>
</reference>
<name>RL363_ARATH</name>
<comment type="similarity">
    <text evidence="3">Belongs to the eukaryotic ribosomal protein eL36 family.</text>
</comment>
<protein>
    <recommendedName>
        <fullName evidence="2">Large ribosomal subunit protein eL36x</fullName>
    </recommendedName>
    <alternativeName>
        <fullName>60S ribosomal protein L36-3</fullName>
    </alternativeName>
</protein>
<feature type="chain" id="PRO_0000195014" description="Large ribosomal subunit protein eL36x">
    <location>
        <begin position="1"/>
        <end position="108"/>
    </location>
</feature>
<feature type="region of interest" description="Disordered" evidence="1">
    <location>
        <begin position="13"/>
        <end position="34"/>
    </location>
</feature>
<feature type="region of interest" description="Disordered" evidence="1">
    <location>
        <begin position="75"/>
        <end position="108"/>
    </location>
</feature>
<feature type="compositionally biased region" description="Basic residues" evidence="1">
    <location>
        <begin position="75"/>
        <end position="84"/>
    </location>
</feature>